<reference key="1">
    <citation type="journal article" date="2006" name="Science">
        <title>Large-scale sequence analysis of avian influenza isolates.</title>
        <authorList>
            <person name="Obenauer J.C."/>
            <person name="Denson J."/>
            <person name="Mehta P.K."/>
            <person name="Su X."/>
            <person name="Mukatira S."/>
            <person name="Finkelstein D.B."/>
            <person name="Xu X."/>
            <person name="Wang J."/>
            <person name="Ma J."/>
            <person name="Fan Y."/>
            <person name="Rakestraw K.M."/>
            <person name="Webster R.G."/>
            <person name="Hoffmann E."/>
            <person name="Krauss S."/>
            <person name="Zheng J."/>
            <person name="Zhang Z."/>
            <person name="Naeve C.W."/>
        </authorList>
    </citation>
    <scope>NUCLEOTIDE SEQUENCE [GENOMIC RNA]</scope>
</reference>
<sequence>MDSNTVSSFQDILMRMSKMQLGSSSEDLNGMITQFESLKLYRDSLEEAVMRMGDLHSLQNRNGKWREQLSQKFEEIRWLIEEVRHRLKITENSFEQITFMQALQLLLEVEQEIRTFSFQLI</sequence>
<organismHost>
    <name type="scientific">Aves</name>
    <dbReference type="NCBI Taxonomy" id="8782"/>
</organismHost>
<organismHost>
    <name type="scientific">Sus scrofa</name>
    <name type="common">Pig</name>
    <dbReference type="NCBI Taxonomy" id="9823"/>
</organismHost>
<evidence type="ECO:0000255" key="1">
    <source>
        <dbReference type="HAMAP-Rule" id="MF_04067"/>
    </source>
</evidence>
<accession>Q20NC0</accession>
<comment type="function">
    <text evidence="1">Mediates the nuclear export of encapsidated genomic RNAs (ribonucleoproteins, RNPs). Acts as an adapter between viral RNPs complexes and the nuclear export machinery of the cell. Possesses no intrinsic RNA-binding activity, but includes a C-terminal M1-binding domain. This domain is believed to allow recognition of RNPs bound to the protein M1. Since protein M1 is not available in large quantities before late stages of infection, such an indirect recognition mechanism probably ensures that genomic RNPs are not exported from the host nucleus until sufficient quantities of viral mRNA and progeny genomic RNA have been synthesized. Furthermore, the RNPs enter the host cytoplasm only when associated with the M1 protein that is necessary to guide them to the plasma membrane. May down-regulate viral RNA synthesis when overproduced.</text>
</comment>
<comment type="subunit">
    <text evidence="1">Interacts with protein M1. May interact with host nucleoporin RAB/HRB and exportin XPO1/CRM1.</text>
</comment>
<comment type="subcellular location">
    <subcellularLocation>
        <location evidence="1">Virion</location>
    </subcellularLocation>
    <subcellularLocation>
        <location evidence="1">Host nucleus</location>
    </subcellularLocation>
</comment>
<comment type="alternative products">
    <event type="alternative splicing"/>
    <isoform>
        <id>Q20NC0-1</id>
        <name>NEP</name>
        <name>NS2</name>
        <sequence type="displayed"/>
    </isoform>
    <isoform>
        <id>Q20NB9-1</id>
        <name>NS1</name>
        <sequence type="external"/>
    </isoform>
</comment>
<comment type="similarity">
    <text evidence="1">Belongs to the influenza viruses NEP family.</text>
</comment>
<proteinExistence type="inferred from homology"/>
<feature type="chain" id="PRO_0000324195" description="Nuclear export protein">
    <location>
        <begin position="1"/>
        <end position="121"/>
    </location>
</feature>
<feature type="short sequence motif" description="Nuclear export signal" evidence="1">
    <location>
        <begin position="12"/>
        <end position="21"/>
    </location>
</feature>
<feature type="short sequence motif" description="Nuclear export signal" evidence="1">
    <location>
        <begin position="85"/>
        <end position="94"/>
    </location>
</feature>
<dbReference type="EMBL" id="CY006039">
    <property type="protein sequence ID" value="ABB90226.1"/>
    <property type="molecule type" value="Genomic_RNA"/>
</dbReference>
<dbReference type="SMR" id="Q20NC0"/>
<dbReference type="Proteomes" id="UP000008434">
    <property type="component" value="Genome"/>
</dbReference>
<dbReference type="Proteomes" id="UP000108613">
    <property type="component" value="Genome"/>
</dbReference>
<dbReference type="GO" id="GO:0042025">
    <property type="term" value="C:host cell nucleus"/>
    <property type="evidence" value="ECO:0007669"/>
    <property type="project" value="UniProtKB-SubCell"/>
</dbReference>
<dbReference type="GO" id="GO:0044423">
    <property type="term" value="C:virion component"/>
    <property type="evidence" value="ECO:0007669"/>
    <property type="project" value="UniProtKB-UniRule"/>
</dbReference>
<dbReference type="GO" id="GO:0039675">
    <property type="term" value="P:exit of virus from host cell nucleus through nuclear pore"/>
    <property type="evidence" value="ECO:0007669"/>
    <property type="project" value="UniProtKB-UniRule"/>
</dbReference>
<dbReference type="Gene3D" id="1.10.287.230">
    <property type="match status" value="1"/>
</dbReference>
<dbReference type="HAMAP" id="MF_04067">
    <property type="entry name" value="INFV_NEP"/>
    <property type="match status" value="1"/>
</dbReference>
<dbReference type="InterPro" id="IPR000968">
    <property type="entry name" value="Flu_NS2"/>
</dbReference>
<dbReference type="Pfam" id="PF00601">
    <property type="entry name" value="Flu_NS2"/>
    <property type="match status" value="1"/>
</dbReference>
<dbReference type="SUPFAM" id="SSF101156">
    <property type="entry name" value="Nonstructural protein ns2, Nep, M1-binding domain"/>
    <property type="match status" value="1"/>
</dbReference>
<protein>
    <recommendedName>
        <fullName evidence="1">Nuclear export protein</fullName>
        <shortName evidence="1">NEP</shortName>
    </recommendedName>
    <alternativeName>
        <fullName evidence="1">Non-structural protein 2</fullName>
        <shortName evidence="1">NS2</shortName>
    </alternativeName>
</protein>
<gene>
    <name evidence="1" type="primary">NS</name>
</gene>
<keyword id="KW-0025">Alternative splicing</keyword>
<keyword id="KW-1048">Host nucleus</keyword>
<keyword id="KW-0945">Host-virus interaction</keyword>
<keyword id="KW-0813">Transport</keyword>
<keyword id="KW-0946">Virion</keyword>
<name>NEP_I56A1</name>
<organism>
    <name type="scientific">Influenza A virus (strain A/Duck/Czechoslovakia/1956 H4N6)</name>
    <dbReference type="NCBI Taxonomy" id="385590"/>
    <lineage>
        <taxon>Viruses</taxon>
        <taxon>Riboviria</taxon>
        <taxon>Orthornavirae</taxon>
        <taxon>Negarnaviricota</taxon>
        <taxon>Polyploviricotina</taxon>
        <taxon>Insthoviricetes</taxon>
        <taxon>Articulavirales</taxon>
        <taxon>Orthomyxoviridae</taxon>
        <taxon>Alphainfluenzavirus</taxon>
        <taxon>Alphainfluenzavirus influenzae</taxon>
        <taxon>Influenza A virus</taxon>
    </lineage>
</organism>